<organism>
    <name type="scientific">Arabidopsis thaliana</name>
    <name type="common">Mouse-ear cress</name>
    <dbReference type="NCBI Taxonomy" id="3702"/>
    <lineage>
        <taxon>Eukaryota</taxon>
        <taxon>Viridiplantae</taxon>
        <taxon>Streptophyta</taxon>
        <taxon>Embryophyta</taxon>
        <taxon>Tracheophyta</taxon>
        <taxon>Spermatophyta</taxon>
        <taxon>Magnoliopsida</taxon>
        <taxon>eudicotyledons</taxon>
        <taxon>Gunneridae</taxon>
        <taxon>Pentapetalae</taxon>
        <taxon>rosids</taxon>
        <taxon>malvids</taxon>
        <taxon>Brassicales</taxon>
        <taxon>Brassicaceae</taxon>
        <taxon>Camelineae</taxon>
        <taxon>Arabidopsis</taxon>
    </lineage>
</organism>
<dbReference type="EMBL" id="AF144703">
    <property type="protein sequence ID" value="AAD39954.1"/>
    <property type="molecule type" value="mRNA"/>
</dbReference>
<dbReference type="EMBL" id="AF368255">
    <property type="protein sequence ID" value="AAK52978.1"/>
    <property type="molecule type" value="mRNA"/>
</dbReference>
<dbReference type="EMBL" id="AC005850">
    <property type="protein sequence ID" value="AAD25551.1"/>
    <property type="molecule type" value="Genomic_DNA"/>
</dbReference>
<dbReference type="EMBL" id="CP002684">
    <property type="protein sequence ID" value="AEE33857.1"/>
    <property type="molecule type" value="Genomic_DNA"/>
</dbReference>
<dbReference type="EMBL" id="AY136299">
    <property type="protein sequence ID" value="AAM96965.1"/>
    <property type="molecule type" value="mRNA"/>
</dbReference>
<dbReference type="EMBL" id="BT003431">
    <property type="protein sequence ID" value="AAO30094.1"/>
    <property type="molecule type" value="mRNA"/>
</dbReference>
<dbReference type="EMBL" id="AY086079">
    <property type="protein sequence ID" value="AAM63285.1"/>
    <property type="molecule type" value="mRNA"/>
</dbReference>
<dbReference type="PIR" id="A96641">
    <property type="entry name" value="A96641"/>
</dbReference>
<dbReference type="RefSeq" id="NP_564780.1">
    <property type="nucleotide sequence ID" value="NM_104839.3"/>
</dbReference>
<dbReference type="SMR" id="Q9XH48"/>
<dbReference type="BioGRID" id="27676">
    <property type="interactions" value="2"/>
</dbReference>
<dbReference type="FunCoup" id="Q9XH48">
    <property type="interactions" value="2185"/>
</dbReference>
<dbReference type="STRING" id="3702.Q9XH48"/>
<dbReference type="iPTMnet" id="Q9XH48"/>
<dbReference type="PaxDb" id="3702-AT1G61570.1"/>
<dbReference type="ProteomicsDB" id="234302"/>
<dbReference type="EnsemblPlants" id="AT1G61570.1">
    <property type="protein sequence ID" value="AT1G61570.1"/>
    <property type="gene ID" value="AT1G61570"/>
</dbReference>
<dbReference type="GeneID" id="842453"/>
<dbReference type="Gramene" id="AT1G61570.1">
    <property type="protein sequence ID" value="AT1G61570.1"/>
    <property type="gene ID" value="AT1G61570"/>
</dbReference>
<dbReference type="KEGG" id="ath:AT1G61570"/>
<dbReference type="Araport" id="AT1G61570"/>
<dbReference type="TAIR" id="AT1G61570">
    <property type="gene designation" value="TIM13"/>
</dbReference>
<dbReference type="eggNOG" id="KOG1733">
    <property type="taxonomic scope" value="Eukaryota"/>
</dbReference>
<dbReference type="HOGENOM" id="CLU_141397_0_2_1"/>
<dbReference type="InParanoid" id="Q9XH48"/>
<dbReference type="OMA" id="MAAWNQV"/>
<dbReference type="PhylomeDB" id="Q9XH48"/>
<dbReference type="CD-CODE" id="4299E36E">
    <property type="entry name" value="Nucleolus"/>
</dbReference>
<dbReference type="PRO" id="PR:Q9XH48"/>
<dbReference type="Proteomes" id="UP000006548">
    <property type="component" value="Chromosome 1"/>
</dbReference>
<dbReference type="ExpressionAtlas" id="Q9XH48">
    <property type="expression patterns" value="baseline and differential"/>
</dbReference>
<dbReference type="GO" id="GO:0005829">
    <property type="term" value="C:cytosol"/>
    <property type="evidence" value="ECO:0007005"/>
    <property type="project" value="TAIR"/>
</dbReference>
<dbReference type="GO" id="GO:0005758">
    <property type="term" value="C:mitochondrial intermembrane space"/>
    <property type="evidence" value="ECO:0007005"/>
    <property type="project" value="TAIR"/>
</dbReference>
<dbReference type="GO" id="GO:0005739">
    <property type="term" value="C:mitochondrion"/>
    <property type="evidence" value="ECO:0007005"/>
    <property type="project" value="TAIR"/>
</dbReference>
<dbReference type="GO" id="GO:0005634">
    <property type="term" value="C:nucleus"/>
    <property type="evidence" value="ECO:0007005"/>
    <property type="project" value="TAIR"/>
</dbReference>
<dbReference type="GO" id="GO:0005507">
    <property type="term" value="F:copper ion binding"/>
    <property type="evidence" value="ECO:0007005"/>
    <property type="project" value="TAIR"/>
</dbReference>
<dbReference type="GO" id="GO:0015031">
    <property type="term" value="P:protein transport"/>
    <property type="evidence" value="ECO:0007669"/>
    <property type="project" value="UniProtKB-KW"/>
</dbReference>
<dbReference type="FunFam" id="1.10.287.810:FF:000001">
    <property type="entry name" value="mitochondrial import inner membrane translocase subunit TIM13"/>
    <property type="match status" value="1"/>
</dbReference>
<dbReference type="Gene3D" id="1.10.287.810">
    <property type="entry name" value="Mitochondrial import inner membrane translocase subunit tim13 like domains"/>
    <property type="match status" value="1"/>
</dbReference>
<dbReference type="InterPro" id="IPR004217">
    <property type="entry name" value="Tim10-like"/>
</dbReference>
<dbReference type="InterPro" id="IPR035427">
    <property type="entry name" value="Tim10-like_dom_sf"/>
</dbReference>
<dbReference type="Pfam" id="PF02953">
    <property type="entry name" value="zf-Tim10_DDP"/>
    <property type="match status" value="1"/>
</dbReference>
<dbReference type="SUPFAM" id="SSF144122">
    <property type="entry name" value="Tim10-like"/>
    <property type="match status" value="1"/>
</dbReference>
<reference key="1">
    <citation type="journal article" date="1999" name="FEBS Lett.">
        <title>The mitochondrial TIM22 preprotein translocase is highly conserved throughout the eukaryotic kingdom.</title>
        <authorList>
            <person name="Bauer M.F."/>
            <person name="Rothbauer U."/>
            <person name="Muehlenbein N."/>
            <person name="Smith R.J.H."/>
            <person name="Gerbitz K.-D."/>
            <person name="Neupert W."/>
            <person name="Brunner M."/>
            <person name="Hofmann S."/>
        </authorList>
    </citation>
    <scope>NUCLEOTIDE SEQUENCE [MRNA]</scope>
</reference>
<reference key="2">
    <citation type="submission" date="2001-04" db="EMBL/GenBank/DDBJ databases">
        <title>Cloning of Arabidopsis thaliana small zinc finger-like proteins TIM9 and TIM13.</title>
        <authorList>
            <person name="Urban M."/>
            <person name="Braun H.-P."/>
        </authorList>
    </citation>
    <scope>NUCLEOTIDE SEQUENCE [MRNA]</scope>
</reference>
<reference key="3">
    <citation type="journal article" date="2000" name="Nature">
        <title>Sequence and analysis of chromosome 1 of the plant Arabidopsis thaliana.</title>
        <authorList>
            <person name="Theologis A."/>
            <person name="Ecker J.R."/>
            <person name="Palm C.J."/>
            <person name="Federspiel N.A."/>
            <person name="Kaul S."/>
            <person name="White O."/>
            <person name="Alonso J."/>
            <person name="Altafi H."/>
            <person name="Araujo R."/>
            <person name="Bowman C.L."/>
            <person name="Brooks S.Y."/>
            <person name="Buehler E."/>
            <person name="Chan A."/>
            <person name="Chao Q."/>
            <person name="Chen H."/>
            <person name="Cheuk R.F."/>
            <person name="Chin C.W."/>
            <person name="Chung M.K."/>
            <person name="Conn L."/>
            <person name="Conway A.B."/>
            <person name="Conway A.R."/>
            <person name="Creasy T.H."/>
            <person name="Dewar K."/>
            <person name="Dunn P."/>
            <person name="Etgu P."/>
            <person name="Feldblyum T.V."/>
            <person name="Feng J.-D."/>
            <person name="Fong B."/>
            <person name="Fujii C.Y."/>
            <person name="Gill J.E."/>
            <person name="Goldsmith A.D."/>
            <person name="Haas B."/>
            <person name="Hansen N.F."/>
            <person name="Hughes B."/>
            <person name="Huizar L."/>
            <person name="Hunter J.L."/>
            <person name="Jenkins J."/>
            <person name="Johnson-Hopson C."/>
            <person name="Khan S."/>
            <person name="Khaykin E."/>
            <person name="Kim C.J."/>
            <person name="Koo H.L."/>
            <person name="Kremenetskaia I."/>
            <person name="Kurtz D.B."/>
            <person name="Kwan A."/>
            <person name="Lam B."/>
            <person name="Langin-Hooper S."/>
            <person name="Lee A."/>
            <person name="Lee J.M."/>
            <person name="Lenz C.A."/>
            <person name="Li J.H."/>
            <person name="Li Y.-P."/>
            <person name="Lin X."/>
            <person name="Liu S.X."/>
            <person name="Liu Z.A."/>
            <person name="Luros J.S."/>
            <person name="Maiti R."/>
            <person name="Marziali A."/>
            <person name="Militscher J."/>
            <person name="Miranda M."/>
            <person name="Nguyen M."/>
            <person name="Nierman W.C."/>
            <person name="Osborne B.I."/>
            <person name="Pai G."/>
            <person name="Peterson J."/>
            <person name="Pham P.K."/>
            <person name="Rizzo M."/>
            <person name="Rooney T."/>
            <person name="Rowley D."/>
            <person name="Sakano H."/>
            <person name="Salzberg S.L."/>
            <person name="Schwartz J.R."/>
            <person name="Shinn P."/>
            <person name="Southwick A.M."/>
            <person name="Sun H."/>
            <person name="Tallon L.J."/>
            <person name="Tambunga G."/>
            <person name="Toriumi M.J."/>
            <person name="Town C.D."/>
            <person name="Utterback T."/>
            <person name="Van Aken S."/>
            <person name="Vaysberg M."/>
            <person name="Vysotskaia V.S."/>
            <person name="Walker M."/>
            <person name="Wu D."/>
            <person name="Yu G."/>
            <person name="Fraser C.M."/>
            <person name="Venter J.C."/>
            <person name="Davis R.W."/>
        </authorList>
    </citation>
    <scope>NUCLEOTIDE SEQUENCE [LARGE SCALE GENOMIC DNA]</scope>
    <source>
        <strain>cv. Columbia</strain>
    </source>
</reference>
<reference key="4">
    <citation type="journal article" date="2017" name="Plant J.">
        <title>Araport11: a complete reannotation of the Arabidopsis thaliana reference genome.</title>
        <authorList>
            <person name="Cheng C.Y."/>
            <person name="Krishnakumar V."/>
            <person name="Chan A.P."/>
            <person name="Thibaud-Nissen F."/>
            <person name="Schobel S."/>
            <person name="Town C.D."/>
        </authorList>
    </citation>
    <scope>GENOME REANNOTATION</scope>
    <source>
        <strain>cv. Columbia</strain>
    </source>
</reference>
<reference key="5">
    <citation type="journal article" date="2003" name="Science">
        <title>Empirical analysis of transcriptional activity in the Arabidopsis genome.</title>
        <authorList>
            <person name="Yamada K."/>
            <person name="Lim J."/>
            <person name="Dale J.M."/>
            <person name="Chen H."/>
            <person name="Shinn P."/>
            <person name="Palm C.J."/>
            <person name="Southwick A.M."/>
            <person name="Wu H.C."/>
            <person name="Kim C.J."/>
            <person name="Nguyen M."/>
            <person name="Pham P.K."/>
            <person name="Cheuk R.F."/>
            <person name="Karlin-Newmann G."/>
            <person name="Liu S.X."/>
            <person name="Lam B."/>
            <person name="Sakano H."/>
            <person name="Wu T."/>
            <person name="Yu G."/>
            <person name="Miranda M."/>
            <person name="Quach H.L."/>
            <person name="Tripp M."/>
            <person name="Chang C.H."/>
            <person name="Lee J.M."/>
            <person name="Toriumi M.J."/>
            <person name="Chan M.M."/>
            <person name="Tang C.C."/>
            <person name="Onodera C.S."/>
            <person name="Deng J.M."/>
            <person name="Akiyama K."/>
            <person name="Ansari Y."/>
            <person name="Arakawa T."/>
            <person name="Banh J."/>
            <person name="Banno F."/>
            <person name="Bowser L."/>
            <person name="Brooks S.Y."/>
            <person name="Carninci P."/>
            <person name="Chao Q."/>
            <person name="Choy N."/>
            <person name="Enju A."/>
            <person name="Goldsmith A.D."/>
            <person name="Gurjal M."/>
            <person name="Hansen N.F."/>
            <person name="Hayashizaki Y."/>
            <person name="Johnson-Hopson C."/>
            <person name="Hsuan V.W."/>
            <person name="Iida K."/>
            <person name="Karnes M."/>
            <person name="Khan S."/>
            <person name="Koesema E."/>
            <person name="Ishida J."/>
            <person name="Jiang P.X."/>
            <person name="Jones T."/>
            <person name="Kawai J."/>
            <person name="Kamiya A."/>
            <person name="Meyers C."/>
            <person name="Nakajima M."/>
            <person name="Narusaka M."/>
            <person name="Seki M."/>
            <person name="Sakurai T."/>
            <person name="Satou M."/>
            <person name="Tamse R."/>
            <person name="Vaysberg M."/>
            <person name="Wallender E.K."/>
            <person name="Wong C."/>
            <person name="Yamamura Y."/>
            <person name="Yuan S."/>
            <person name="Shinozaki K."/>
            <person name="Davis R.W."/>
            <person name="Theologis A."/>
            <person name="Ecker J.R."/>
        </authorList>
    </citation>
    <scope>NUCLEOTIDE SEQUENCE [LARGE SCALE MRNA]</scope>
    <source>
        <strain>cv. Columbia</strain>
    </source>
</reference>
<reference key="6">
    <citation type="submission" date="2002-03" db="EMBL/GenBank/DDBJ databases">
        <title>Full-length cDNA from Arabidopsis thaliana.</title>
        <authorList>
            <person name="Brover V.V."/>
            <person name="Troukhan M.E."/>
            <person name="Alexandrov N.A."/>
            <person name="Lu Y.-P."/>
            <person name="Flavell R.B."/>
            <person name="Feldmann K.A."/>
        </authorList>
    </citation>
    <scope>NUCLEOTIDE SEQUENCE [LARGE SCALE MRNA]</scope>
</reference>
<reference key="7">
    <citation type="journal article" date="2004" name="Plant Cell">
        <title>Experimental analysis of the Arabidopsis mitochondrial proteome highlights signaling and regulatory components, provides assessment of targeting prediction programs, and indicates plant-specific mitochondrial proteins.</title>
        <authorList>
            <person name="Heazlewood J.L."/>
            <person name="Tonti-Filippini J.S."/>
            <person name="Gout A.M."/>
            <person name="Day D.A."/>
            <person name="Whelan J."/>
            <person name="Millar A.H."/>
        </authorList>
    </citation>
    <scope>IDENTIFICATION BY MASS SPECTROMETRY</scope>
    <scope>SUBCELLULAR LOCATION [LARGE SCALE ANALYSIS]</scope>
    <source>
        <strain>cv. Landsberg erecta</strain>
    </source>
</reference>
<reference key="8">
    <citation type="journal article" date="2004" name="Plant Physiol.">
        <title>A transcriptomic and proteomic characterization of the Arabidopsis mitochondrial protein import apparatus and its response to mitochondrial dysfunction.</title>
        <authorList>
            <person name="Lister R."/>
            <person name="Chew O."/>
            <person name="Lee M.N."/>
            <person name="Heazlewood J.L."/>
            <person name="Clifton R."/>
            <person name="Parker K.L."/>
            <person name="Millar A.H."/>
            <person name="Whelan J."/>
        </authorList>
    </citation>
    <scope>TISSUE SPECIFICITY</scope>
    <scope>SUBCELLULAR LOCATION</scope>
    <scope>IDENTIFICATION BY MASS SPECTROMETRY</scope>
</reference>
<feature type="chain" id="PRO_0000193629" description="Mitochondrial import inner membrane translocase subunit TIM13">
    <location>
        <begin position="1"/>
        <end position="87"/>
    </location>
</feature>
<feature type="region of interest" description="Disordered" evidence="2">
    <location>
        <begin position="1"/>
        <end position="20"/>
    </location>
</feature>
<feature type="short sequence motif" description="Twin CX3C motif">
    <location>
        <begin position="45"/>
        <end position="68"/>
    </location>
</feature>
<feature type="disulfide bond" evidence="1">
    <location>
        <begin position="45"/>
        <end position="68"/>
    </location>
</feature>
<feature type="disulfide bond" evidence="1">
    <location>
        <begin position="49"/>
        <end position="64"/>
    </location>
</feature>
<feature type="sequence conflict" description="In Ref. 2; AAK52978." evidence="4" ref="2">
    <original>F</original>
    <variation>L</variation>
    <location>
        <position position="46"/>
    </location>
</feature>
<feature type="sequence conflict" description="In Ref. 1; AAD39954." evidence="4" ref="1">
    <original>R</original>
    <variation>L</variation>
    <location>
        <position position="87"/>
    </location>
</feature>
<proteinExistence type="evidence at protein level"/>
<keyword id="KW-0143">Chaperone</keyword>
<keyword id="KW-1015">Disulfide bond</keyword>
<keyword id="KW-0479">Metal-binding</keyword>
<keyword id="KW-0496">Mitochondrion</keyword>
<keyword id="KW-0653">Protein transport</keyword>
<keyword id="KW-1185">Reference proteome</keyword>
<keyword id="KW-0811">Translocation</keyword>
<keyword id="KW-0813">Transport</keyword>
<keyword id="KW-0862">Zinc</keyword>
<accession>Q9XH48</accession>
<accession>Q94KC4</accession>
<accession>Q9SY93</accession>
<protein>
    <recommendedName>
        <fullName>Mitochondrial import inner membrane translocase subunit TIM13</fullName>
    </recommendedName>
</protein>
<name>TIM13_ARATH</name>
<evidence type="ECO:0000250" key="1"/>
<evidence type="ECO:0000256" key="2">
    <source>
        <dbReference type="SAM" id="MobiDB-lite"/>
    </source>
</evidence>
<evidence type="ECO:0000269" key="3">
    <source>
    </source>
</evidence>
<evidence type="ECO:0000305" key="4"/>
<comment type="function">
    <text evidence="1">Mitochondrial intermembrane chaperone that participates in the import and insertion of some multi-pass transmembrane proteins into the mitochondrial inner membrane. Also required for the transfer of beta-barrel precursors from the TOM complex to the sorting and assembly machinery (SAM complex) of the outer membrane. Acts as a chaperone-like protein that protects the hydrophobic precursors from aggregation and guide them through the mitochondrial intermembrane space. The TIM8-TIM13 complex mediates the import of some proteins while the predominant TIM9-TIM10 70 kDa complex mediates the import of much more proteins (By similarity).</text>
</comment>
<comment type="subunit">
    <text evidence="1">Heterohexamer; composed of 3 copies of TIM8 and 3 copies of TIM13, named soluble 70 kDa complex. Associates with the TIM22 complex, whose core is composed of TIM22 (By similarity).</text>
</comment>
<comment type="subcellular location">
    <subcellularLocation>
        <location evidence="3">Mitochondrion intermembrane space</location>
    </subcellularLocation>
</comment>
<comment type="tissue specificity">
    <text evidence="3">Expressed in roots, flowers, young cotyledons and leaves.</text>
</comment>
<comment type="domain">
    <text evidence="1">The twin CX3C motif contains 4 conserved Cys residues that form 2 disulfide bonds in the mitochondrial intermembrane space. However, during the transit of TIM13 from cytoplasm into mitochondrion, the Cys residues probably coordinate zinc, thereby preventing folding and allowing its transfer across mitochondrial outer membrane (By similarity).</text>
</comment>
<comment type="similarity">
    <text evidence="4">Belongs to the small Tim family.</text>
</comment>
<sequence>MDSYSSPPMGGSGSSVSPEVMMESVKTQLAQAYAEELIETLRTKCFDKCVTKPGSSLGGSESSCISRCVERYMEATAIISRSLFTQR</sequence>
<gene>
    <name type="primary">TIM13</name>
    <name type="ordered locus">At1g61570</name>
    <name type="ORF">T25B24.8</name>
    <name type="ORF">T25B24_16</name>
</gene>